<dbReference type="EMBL" id="U00668">
    <property type="protein sequence ID" value="AAB60626.1"/>
    <property type="molecule type" value="Genomic_DNA"/>
</dbReference>
<dbReference type="EMBL" id="U00666">
    <property type="protein sequence ID" value="AAB60626.1"/>
    <property type="status" value="JOINED"/>
    <property type="molecule type" value="Genomic_DNA"/>
</dbReference>
<dbReference type="EMBL" id="U00667">
    <property type="protein sequence ID" value="AAB60626.1"/>
    <property type="status" value="JOINED"/>
    <property type="molecule type" value="Genomic_DNA"/>
</dbReference>
<dbReference type="EMBL" id="X15248">
    <property type="protein sequence ID" value="CAA33324.1"/>
    <property type="molecule type" value="mRNA"/>
</dbReference>
<dbReference type="EMBL" id="X53554">
    <property type="protein sequence ID" value="CAA37621.1"/>
    <property type="molecule type" value="mRNA"/>
</dbReference>
<dbReference type="EMBL" id="M89788">
    <property type="protein sequence ID" value="AAA31548.1"/>
    <property type="molecule type" value="mRNA"/>
</dbReference>
<dbReference type="EMBL" id="M89789">
    <property type="protein sequence ID" value="AAA31549.1"/>
    <property type="molecule type" value="mRNA"/>
</dbReference>
<dbReference type="EMBL" id="X55638">
    <property type="protein sequence ID" value="CAA39163.1"/>
    <property type="molecule type" value="mRNA"/>
</dbReference>
<dbReference type="PIR" id="S04858">
    <property type="entry name" value="S04858"/>
</dbReference>
<dbReference type="RefSeq" id="NP_001009311.1">
    <property type="nucleotide sequence ID" value="NM_001009311.1"/>
</dbReference>
<dbReference type="RefSeq" id="XP_014958377.1">
    <property type="nucleotide sequence ID" value="XM_015102891.4"/>
</dbReference>
<dbReference type="RefSeq" id="XP_027815053.1">
    <property type="nucleotide sequence ID" value="XM_027959252.3"/>
</dbReference>
<dbReference type="SMR" id="P10764"/>
<dbReference type="STRING" id="9940.ENSOARP00000003830"/>
<dbReference type="GlyCosmos" id="P10764">
    <property type="glycosylation" value="3 sites, No reported glycans"/>
</dbReference>
<dbReference type="PaxDb" id="9940-ENSOARP00000003830"/>
<dbReference type="GeneID" id="443325"/>
<dbReference type="KEGG" id="oas:443325"/>
<dbReference type="CTD" id="3481"/>
<dbReference type="eggNOG" id="ENOG502S0I0">
    <property type="taxonomic scope" value="Eukaryota"/>
</dbReference>
<dbReference type="OrthoDB" id="9449995at2759"/>
<dbReference type="Proteomes" id="UP000002356">
    <property type="component" value="Unplaced"/>
</dbReference>
<dbReference type="GO" id="GO:0005615">
    <property type="term" value="C:extracellular space"/>
    <property type="evidence" value="ECO:0000314"/>
    <property type="project" value="AgBase"/>
</dbReference>
<dbReference type="GO" id="GO:0008083">
    <property type="term" value="F:growth factor activity"/>
    <property type="evidence" value="ECO:0007669"/>
    <property type="project" value="UniProtKB-KW"/>
</dbReference>
<dbReference type="GO" id="GO:0005179">
    <property type="term" value="F:hormone activity"/>
    <property type="evidence" value="ECO:0007669"/>
    <property type="project" value="UniProtKB-KW"/>
</dbReference>
<dbReference type="GO" id="GO:0005159">
    <property type="term" value="F:insulin-like growth factor receptor binding"/>
    <property type="evidence" value="ECO:0007669"/>
    <property type="project" value="TreeGrafter"/>
</dbReference>
<dbReference type="GO" id="GO:0005178">
    <property type="term" value="F:integrin binding"/>
    <property type="evidence" value="ECO:0000250"/>
    <property type="project" value="UniProtKB"/>
</dbReference>
<dbReference type="GO" id="GO:0043539">
    <property type="term" value="F:protein serine/threonine kinase activator activity"/>
    <property type="evidence" value="ECO:0007669"/>
    <property type="project" value="TreeGrafter"/>
</dbReference>
<dbReference type="GO" id="GO:0001892">
    <property type="term" value="P:embryonic placenta development"/>
    <property type="evidence" value="ECO:0000250"/>
    <property type="project" value="UniProtKB"/>
</dbReference>
<dbReference type="GO" id="GO:0060669">
    <property type="term" value="P:embryonic placenta morphogenesis"/>
    <property type="evidence" value="ECO:0000250"/>
    <property type="project" value="UniProtKB"/>
</dbReference>
<dbReference type="GO" id="GO:0006006">
    <property type="term" value="P:glucose metabolic process"/>
    <property type="evidence" value="ECO:0007669"/>
    <property type="project" value="UniProtKB-KW"/>
</dbReference>
<dbReference type="GO" id="GO:0001701">
    <property type="term" value="P:in utero embryonic development"/>
    <property type="evidence" value="ECO:0000250"/>
    <property type="project" value="UniProtKB"/>
</dbReference>
<dbReference type="GO" id="GO:0051148">
    <property type="term" value="P:negative regulation of muscle cell differentiation"/>
    <property type="evidence" value="ECO:0000250"/>
    <property type="project" value="UniProtKB"/>
</dbReference>
<dbReference type="GO" id="GO:0000122">
    <property type="term" value="P:negative regulation of transcription by RNA polymerase II"/>
    <property type="evidence" value="ECO:0000250"/>
    <property type="project" value="UniProtKB"/>
</dbReference>
<dbReference type="GO" id="GO:0001503">
    <property type="term" value="P:ossification"/>
    <property type="evidence" value="ECO:0007669"/>
    <property type="project" value="UniProtKB-KW"/>
</dbReference>
<dbReference type="GO" id="GO:0042104">
    <property type="term" value="P:positive regulation of activated T cell proliferation"/>
    <property type="evidence" value="ECO:0007669"/>
    <property type="project" value="TreeGrafter"/>
</dbReference>
<dbReference type="GO" id="GO:0051781">
    <property type="term" value="P:positive regulation of cell division"/>
    <property type="evidence" value="ECO:0007669"/>
    <property type="project" value="UniProtKB-KW"/>
</dbReference>
<dbReference type="GO" id="GO:0008284">
    <property type="term" value="P:positive regulation of cell population proliferation"/>
    <property type="evidence" value="ECO:0000250"/>
    <property type="project" value="UniProtKB"/>
</dbReference>
<dbReference type="GO" id="GO:0046628">
    <property type="term" value="P:positive regulation of insulin receptor signaling pathway"/>
    <property type="evidence" value="ECO:0007669"/>
    <property type="project" value="TreeGrafter"/>
</dbReference>
<dbReference type="GO" id="GO:0043410">
    <property type="term" value="P:positive regulation of MAPK cascade"/>
    <property type="evidence" value="ECO:0007669"/>
    <property type="project" value="TreeGrafter"/>
</dbReference>
<dbReference type="GO" id="GO:0045944">
    <property type="term" value="P:positive regulation of transcription by RNA polymerase II"/>
    <property type="evidence" value="ECO:0007669"/>
    <property type="project" value="TreeGrafter"/>
</dbReference>
<dbReference type="GO" id="GO:1905564">
    <property type="term" value="P:positive regulation of vascular endothelial cell proliferation"/>
    <property type="evidence" value="ECO:0007669"/>
    <property type="project" value="TreeGrafter"/>
</dbReference>
<dbReference type="GO" id="GO:0051147">
    <property type="term" value="P:regulation of muscle cell differentiation"/>
    <property type="evidence" value="ECO:0000250"/>
    <property type="project" value="UniProtKB"/>
</dbReference>
<dbReference type="CDD" id="cd04368">
    <property type="entry name" value="IlGF"/>
    <property type="match status" value="1"/>
</dbReference>
<dbReference type="FunFam" id="1.10.100.10:FF:000002">
    <property type="entry name" value="Insulin-like growth factor II preproprotein"/>
    <property type="match status" value="1"/>
</dbReference>
<dbReference type="Gene3D" id="1.10.100.10">
    <property type="entry name" value="Insulin-like"/>
    <property type="match status" value="1"/>
</dbReference>
<dbReference type="InterPro" id="IPR022334">
    <property type="entry name" value="IGF2"/>
</dbReference>
<dbReference type="InterPro" id="IPR013576">
    <property type="entry name" value="IGF2_C"/>
</dbReference>
<dbReference type="InterPro" id="IPR016179">
    <property type="entry name" value="Insulin-like"/>
</dbReference>
<dbReference type="InterPro" id="IPR022350">
    <property type="entry name" value="Insulin-like_growth_factor"/>
</dbReference>
<dbReference type="InterPro" id="IPR036438">
    <property type="entry name" value="Insulin-like_sf"/>
</dbReference>
<dbReference type="InterPro" id="IPR022353">
    <property type="entry name" value="Insulin_CS"/>
</dbReference>
<dbReference type="InterPro" id="IPR022352">
    <property type="entry name" value="Insulin_family"/>
</dbReference>
<dbReference type="PANTHER" id="PTHR46886">
    <property type="entry name" value="INSULIN-LIKE GROWTH FACTOR II"/>
    <property type="match status" value="1"/>
</dbReference>
<dbReference type="PANTHER" id="PTHR46886:SF1">
    <property type="entry name" value="INSULIN-LIKE GROWTH FACTOR II"/>
    <property type="match status" value="1"/>
</dbReference>
<dbReference type="Pfam" id="PF08365">
    <property type="entry name" value="IGF2_C"/>
    <property type="match status" value="1"/>
</dbReference>
<dbReference type="Pfam" id="PF00049">
    <property type="entry name" value="Insulin"/>
    <property type="match status" value="2"/>
</dbReference>
<dbReference type="PRINTS" id="PR02002">
    <property type="entry name" value="INSLNLIKEGF"/>
</dbReference>
<dbReference type="PRINTS" id="PR02006">
    <property type="entry name" value="INSLNLIKEGF2"/>
</dbReference>
<dbReference type="PRINTS" id="PR00276">
    <property type="entry name" value="INSULINFAMLY"/>
</dbReference>
<dbReference type="SMART" id="SM00078">
    <property type="entry name" value="IlGF"/>
    <property type="match status" value="1"/>
</dbReference>
<dbReference type="SUPFAM" id="SSF56994">
    <property type="entry name" value="Insulin-like"/>
    <property type="match status" value="1"/>
</dbReference>
<dbReference type="PROSITE" id="PS00262">
    <property type="entry name" value="INSULIN"/>
    <property type="match status" value="1"/>
</dbReference>
<proteinExistence type="evidence at protein level"/>
<reference key="1">
    <citation type="journal article" date="1989" name="Nucleic Acids Res.">
        <title>Nucleotide sequence of an ovine insulin-like growth factor-II cDNA.</title>
        <authorList>
            <person name="O'Mahoney J.V."/>
            <person name="Adams T.E."/>
        </authorList>
    </citation>
    <scope>NUCLEOTIDE SEQUENCE [MRNA]</scope>
    <source>
        <tissue>Liver</tissue>
    </source>
</reference>
<reference key="2">
    <citation type="journal article" date="1990" name="Nucleic Acids Res.">
        <title>The nucleotide and deduced amino acid sequences of insulin-like growth factor II cDNAs from adult bovine and fetal sheep liver.</title>
        <authorList>
            <person name="Brown W.M."/>
            <person name="Dziegielewska K.M."/>
            <person name="Foreman R.C."/>
            <person name="Saunders N.R."/>
        </authorList>
    </citation>
    <scope>NUCLEOTIDE SEQUENCE [MRNA]</scope>
    <source>
        <tissue>Liver</tissue>
    </source>
</reference>
<reference key="3">
    <citation type="journal article" date="1993" name="Biochim. Biophys. Acta">
        <title>Characterization of two sheep insulin-like growth factor II cDNAs with different 5'-untranslated regions.</title>
        <authorList>
            <person name="Demmer J."/>
            <person name="Hill D.F."/>
            <person name="Petersen G.B."/>
        </authorList>
    </citation>
    <scope>NUCLEOTIDE SEQUENCE [GENOMIC DNA / MRNA]</scope>
    <source>
        <strain>Coopworth</strain>
        <tissue>Liver</tissue>
    </source>
</reference>
<reference key="4">
    <citation type="submission" date="1990-09" db="EMBL/GenBank/DDBJ databases">
        <authorList>
            <person name="Ohlsen S.M."/>
            <person name="Wong E.A."/>
        </authorList>
    </citation>
    <scope>NUCLEOTIDE SEQUENCE</scope>
    <source>
        <tissue>Liver</tissue>
    </source>
</reference>
<reference key="5">
    <citation type="journal article" date="1989" name="Endocrinology">
        <title>Sheep insulin-like growth factors I and II: sequences, activities and assays.</title>
        <authorList>
            <person name="Francis G.L."/>
            <person name="McNeil K.A."/>
            <person name="Wallace J.C."/>
            <person name="Ballard F.J."/>
            <person name="Owens P.C."/>
        </authorList>
    </citation>
    <scope>PROTEIN SEQUENCE OF 25-91</scope>
</reference>
<reference key="6">
    <citation type="journal article" date="1989" name="Biochim. Biophys. Acta">
        <title>Simultaneous isolation of insulin-like growth factors I and II from adult sheep serum.</title>
        <authorList>
            <person name="Hey A.W."/>
            <person name="Browne C.A."/>
            <person name="Simpson R.J."/>
            <person name="Thorburn G.D."/>
        </authorList>
    </citation>
    <scope>PROTEIN SEQUENCE OF 25-58</scope>
</reference>
<feature type="signal peptide" evidence="6 7">
    <location>
        <begin position="1"/>
        <end position="24"/>
    </location>
</feature>
<feature type="chain" id="PRO_0000015731" description="Insulin-like growth factor 2">
    <location>
        <begin position="25"/>
        <end position="91"/>
    </location>
</feature>
<feature type="propeptide" id="PRO_0000015732" description="E peptide">
    <location>
        <begin position="92"/>
        <end position="179"/>
    </location>
</feature>
<feature type="peptide" id="PRO_0000370381" description="Preptin">
    <location>
        <begin position="93"/>
        <end position="126"/>
    </location>
</feature>
<feature type="region of interest" description="B">
    <location>
        <begin position="25"/>
        <end position="52"/>
    </location>
</feature>
<feature type="region of interest" description="C">
    <location>
        <begin position="53"/>
        <end position="64"/>
    </location>
</feature>
<feature type="region of interest" description="A">
    <location>
        <begin position="65"/>
        <end position="85"/>
    </location>
</feature>
<feature type="region of interest" description="D">
    <location>
        <begin position="86"/>
        <end position="91"/>
    </location>
</feature>
<feature type="region of interest" description="Disordered" evidence="5">
    <location>
        <begin position="160"/>
        <end position="179"/>
    </location>
</feature>
<feature type="site" description="Important for interaction with integrin" evidence="2">
    <location>
        <position position="48"/>
    </location>
</feature>
<feature type="site" description="Important for interaction with integrin" evidence="2">
    <location>
        <position position="58"/>
    </location>
</feature>
<feature type="site" description="Important for interaction with integrin" evidence="2">
    <location>
        <position position="61"/>
    </location>
</feature>
<feature type="site" description="Important for interaction with integrin" evidence="2">
    <location>
        <position position="62"/>
    </location>
</feature>
<feature type="glycosylation site" description="O-linked (GalNAc...) threonine" evidence="3">
    <location>
        <position position="106"/>
    </location>
</feature>
<feature type="glycosylation site" description="O-linked (GalNAc...) serine" evidence="3">
    <location>
        <position position="154"/>
    </location>
</feature>
<feature type="glycosylation site" description="O-linked (GalNAc...) threonine" evidence="3">
    <location>
        <position position="163"/>
    </location>
</feature>
<feature type="disulfide bond" evidence="1">
    <location>
        <begin position="33"/>
        <end position="71"/>
    </location>
</feature>
<feature type="disulfide bond" evidence="1">
    <location>
        <begin position="45"/>
        <end position="84"/>
    </location>
</feature>
<feature type="disulfide bond" evidence="1">
    <location>
        <begin position="70"/>
        <end position="75"/>
    </location>
</feature>
<feature type="sequence conflict" description="In Ref. 5; AA sequence." evidence="9" ref="5">
    <original>GD</original>
    <variation>DG</variation>
    <location>
        <begin position="46"/>
        <end position="47"/>
    </location>
</feature>
<comment type="function">
    <text evidence="2 4">The insulin-like growth factors possess growth-promoting activity (By similarity). Major fetal growth hormone in mammals. Plays a key role in regulating fetoplacental development. IGF2 is influenced by placental lactogen. Also involved in tissue differentiation. In adults, involved in glucose metabolism in adipose tissue, skeletal muscle and liver. Acts as a ligand for integrin which is required for IGF2 signaling. Positively regulates myogenic transcription factor MYOD1 function by facilitating the recruitment of transcriptional coactivators, thereby controlling muscle terminal differentiation (By similarity). Inhibits myoblast differentiation and modulates metabolism via increasing the mitochondrial respiration rate (By similarity).</text>
</comment>
<comment type="function">
    <text evidence="2 4">Preptin undergoes glucose-mediated co-secretion with insulin, and acts as a physiological amplifier of glucose-mediated insulin secretion. Exhibits osteogenic properties by increasing osteoblast mitogenic activity through phosphoactivation of MAPK1 and MAPK3.</text>
</comment>
<comment type="subunit">
    <text evidence="2 4">Interacts with MYORG; this interaction is required for IGF2 secretion. Interacts with integrins ITGAV:ITGB3 and ITGA6:ITGB4; integrin-binding is required for IGF2 signaling. Interacts with IGFBP2.</text>
</comment>
<comment type="subcellular location">
    <subcellularLocation>
        <location evidence="2 4">Secreted</location>
    </subcellularLocation>
</comment>
<comment type="PTM">
    <text evidence="2">Proteolytically processed by PCSK4, proIGF2 is cleaved at Arg-128 and Arg-92 to generate big-IGF2 and mature IGF2.</text>
</comment>
<comment type="miscellaneous">
    <text evidence="4">The IGF2 locus is imprinted. Paternal inherited gene is expressed, while the maternal inherited gene is imprinted, hence silenced.</text>
</comment>
<comment type="similarity">
    <text evidence="9">Belongs to the insulin family.</text>
</comment>
<name>IGF2_SHEEP</name>
<sequence>MGITAGKSMLALLAFLAFASCCYAAYRPSETLCGGELVDTLQFVCGDRGFYFSRPSSRINRRSRGIVEECCFRSCDLALLETYCAAPAKSERDVSASTTVLPDDFTAYPVGKFFQSDTWKQSTQRLRRGLPAFLRARRGRTLAKELEALREAKSHRPLIALPTQDPATHGGASSEASSD</sequence>
<protein>
    <recommendedName>
        <fullName evidence="2">Insulin-like growth factor 2</fullName>
    </recommendedName>
    <alternativeName>
        <fullName evidence="8">Insulin-like growth factor II</fullName>
        <shortName evidence="8">IGF-II</shortName>
    </alternativeName>
    <component>
        <recommendedName>
            <fullName evidence="2">Preptin</fullName>
        </recommendedName>
    </component>
</protein>
<organism>
    <name type="scientific">Ovis aries</name>
    <name type="common">Sheep</name>
    <dbReference type="NCBI Taxonomy" id="9940"/>
    <lineage>
        <taxon>Eukaryota</taxon>
        <taxon>Metazoa</taxon>
        <taxon>Chordata</taxon>
        <taxon>Craniata</taxon>
        <taxon>Vertebrata</taxon>
        <taxon>Euteleostomi</taxon>
        <taxon>Mammalia</taxon>
        <taxon>Eutheria</taxon>
        <taxon>Laurasiatheria</taxon>
        <taxon>Artiodactyla</taxon>
        <taxon>Ruminantia</taxon>
        <taxon>Pecora</taxon>
        <taxon>Bovidae</taxon>
        <taxon>Caprinae</taxon>
        <taxon>Ovis</taxon>
    </lineage>
</organism>
<keyword id="KW-0119">Carbohydrate metabolism</keyword>
<keyword id="KW-0165">Cleavage on pair of basic residues</keyword>
<keyword id="KW-0903">Direct protein sequencing</keyword>
<keyword id="KW-1015">Disulfide bond</keyword>
<keyword id="KW-0313">Glucose metabolism</keyword>
<keyword id="KW-0325">Glycoprotein</keyword>
<keyword id="KW-0339">Growth factor</keyword>
<keyword id="KW-0372">Hormone</keyword>
<keyword id="KW-0497">Mitogen</keyword>
<keyword id="KW-0892">Osteogenesis</keyword>
<keyword id="KW-1185">Reference proteome</keyword>
<keyword id="KW-0964">Secreted</keyword>
<keyword id="KW-0732">Signal</keyword>
<accession>P10764</accession>
<evidence type="ECO:0000250" key="1"/>
<evidence type="ECO:0000250" key="2">
    <source>
        <dbReference type="UniProtKB" id="P01344"/>
    </source>
</evidence>
<evidence type="ECO:0000250" key="3">
    <source>
        <dbReference type="UniProtKB" id="P07456"/>
    </source>
</evidence>
<evidence type="ECO:0000250" key="4">
    <source>
        <dbReference type="UniProtKB" id="P09535"/>
    </source>
</evidence>
<evidence type="ECO:0000256" key="5">
    <source>
        <dbReference type="SAM" id="MobiDB-lite"/>
    </source>
</evidence>
<evidence type="ECO:0000269" key="6">
    <source>
    </source>
</evidence>
<evidence type="ECO:0000269" key="7">
    <source>
    </source>
</evidence>
<evidence type="ECO:0000303" key="8">
    <source>
    </source>
</evidence>
<evidence type="ECO:0000305" key="9"/>
<gene>
    <name evidence="2" type="primary">IGF2</name>
    <name evidence="9" type="synonym">IGF-2</name>
</gene>